<accession>Q9YB45</accession>
<gene>
    <name type="primary">rps2</name>
    <name type="ordered locus">APE_1750</name>
</gene>
<reference key="1">
    <citation type="journal article" date="1999" name="DNA Res.">
        <title>Complete genome sequence of an aerobic hyper-thermophilic crenarchaeon, Aeropyrum pernix K1.</title>
        <authorList>
            <person name="Kawarabayasi Y."/>
            <person name="Hino Y."/>
            <person name="Horikawa H."/>
            <person name="Yamazaki S."/>
            <person name="Haikawa Y."/>
            <person name="Jin-no K."/>
            <person name="Takahashi M."/>
            <person name="Sekine M."/>
            <person name="Baba S."/>
            <person name="Ankai A."/>
            <person name="Kosugi H."/>
            <person name="Hosoyama A."/>
            <person name="Fukui S."/>
            <person name="Nagai Y."/>
            <person name="Nishijima K."/>
            <person name="Nakazawa H."/>
            <person name="Takamiya M."/>
            <person name="Masuda S."/>
            <person name="Funahashi T."/>
            <person name="Tanaka T."/>
            <person name="Kudoh Y."/>
            <person name="Yamazaki J."/>
            <person name="Kushida N."/>
            <person name="Oguchi A."/>
            <person name="Aoki K."/>
            <person name="Kubota K."/>
            <person name="Nakamura Y."/>
            <person name="Nomura N."/>
            <person name="Sako Y."/>
            <person name="Kikuchi H."/>
        </authorList>
    </citation>
    <scope>NUCLEOTIDE SEQUENCE [LARGE SCALE GENOMIC DNA]</scope>
    <source>
        <strain>ATCC 700893 / DSM 11879 / JCM 9820 / NBRC 100138 / K1</strain>
    </source>
</reference>
<evidence type="ECO:0000305" key="1"/>
<organism>
    <name type="scientific">Aeropyrum pernix (strain ATCC 700893 / DSM 11879 / JCM 9820 / NBRC 100138 / K1)</name>
    <dbReference type="NCBI Taxonomy" id="272557"/>
    <lineage>
        <taxon>Archaea</taxon>
        <taxon>Thermoproteota</taxon>
        <taxon>Thermoprotei</taxon>
        <taxon>Desulfurococcales</taxon>
        <taxon>Desulfurococcaceae</taxon>
        <taxon>Aeropyrum</taxon>
    </lineage>
</organism>
<protein>
    <recommendedName>
        <fullName evidence="1">Small ribosomal subunit protein uS2</fullName>
    </recommendedName>
    <alternativeName>
        <fullName>30S ribosomal protein S2</fullName>
    </alternativeName>
</protein>
<feature type="chain" id="PRO_0000134318" description="Small ribosomal subunit protein uS2">
    <location>
        <begin position="1"/>
        <end position="205"/>
    </location>
</feature>
<dbReference type="EMBL" id="BA000002">
    <property type="protein sequence ID" value="BAA80753.1"/>
    <property type="molecule type" value="Genomic_DNA"/>
</dbReference>
<dbReference type="PIR" id="D72558">
    <property type="entry name" value="D72558"/>
</dbReference>
<dbReference type="RefSeq" id="WP_010866572.1">
    <property type="nucleotide sequence ID" value="NC_000854.2"/>
</dbReference>
<dbReference type="SMR" id="Q9YB45"/>
<dbReference type="STRING" id="272557.APE_1750"/>
<dbReference type="EnsemblBacteria" id="BAA80753">
    <property type="protein sequence ID" value="BAA80753"/>
    <property type="gene ID" value="APE_1750"/>
</dbReference>
<dbReference type="GeneID" id="1446217"/>
<dbReference type="KEGG" id="ape:APE_1750"/>
<dbReference type="PATRIC" id="fig|272557.25.peg.1177"/>
<dbReference type="eggNOG" id="arCOG04245">
    <property type="taxonomic scope" value="Archaea"/>
</dbReference>
<dbReference type="Proteomes" id="UP000002518">
    <property type="component" value="Chromosome"/>
</dbReference>
<dbReference type="GO" id="GO:0015935">
    <property type="term" value="C:small ribosomal subunit"/>
    <property type="evidence" value="ECO:0007669"/>
    <property type="project" value="InterPro"/>
</dbReference>
<dbReference type="GO" id="GO:0003735">
    <property type="term" value="F:structural constituent of ribosome"/>
    <property type="evidence" value="ECO:0007669"/>
    <property type="project" value="InterPro"/>
</dbReference>
<dbReference type="GO" id="GO:0006412">
    <property type="term" value="P:translation"/>
    <property type="evidence" value="ECO:0007669"/>
    <property type="project" value="UniProtKB-UniRule"/>
</dbReference>
<dbReference type="CDD" id="cd01425">
    <property type="entry name" value="RPS2"/>
    <property type="match status" value="1"/>
</dbReference>
<dbReference type="FunFam" id="3.40.50.10490:FF:000030">
    <property type="entry name" value="30S ribosomal protein S2"/>
    <property type="match status" value="1"/>
</dbReference>
<dbReference type="Gene3D" id="3.40.50.10490">
    <property type="entry name" value="Glucose-6-phosphate isomerase like protein, domain 1"/>
    <property type="match status" value="1"/>
</dbReference>
<dbReference type="HAMAP" id="MF_00291_A">
    <property type="entry name" value="Ribosomal_uS2_A"/>
    <property type="match status" value="1"/>
</dbReference>
<dbReference type="InterPro" id="IPR001865">
    <property type="entry name" value="Ribosomal_uS2"/>
</dbReference>
<dbReference type="InterPro" id="IPR023454">
    <property type="entry name" value="Ribosomal_uS2_arc"/>
</dbReference>
<dbReference type="InterPro" id="IPR018130">
    <property type="entry name" value="Ribosomal_uS2_CS"/>
</dbReference>
<dbReference type="InterPro" id="IPR005707">
    <property type="entry name" value="Ribosomal_uS2_euk/arc"/>
</dbReference>
<dbReference type="InterPro" id="IPR023591">
    <property type="entry name" value="Ribosomal_uS2_flav_dom_sf"/>
</dbReference>
<dbReference type="NCBIfam" id="TIGR01012">
    <property type="entry name" value="uS2_euk_arch"/>
    <property type="match status" value="1"/>
</dbReference>
<dbReference type="PANTHER" id="PTHR11489">
    <property type="entry name" value="40S RIBOSOMAL PROTEIN SA"/>
    <property type="match status" value="1"/>
</dbReference>
<dbReference type="Pfam" id="PF00318">
    <property type="entry name" value="Ribosomal_S2"/>
    <property type="match status" value="1"/>
</dbReference>
<dbReference type="PRINTS" id="PR00395">
    <property type="entry name" value="RIBOSOMALS2"/>
</dbReference>
<dbReference type="SUPFAM" id="SSF52313">
    <property type="entry name" value="Ribosomal protein S2"/>
    <property type="match status" value="1"/>
</dbReference>
<dbReference type="PROSITE" id="PS00963">
    <property type="entry name" value="RIBOSOMAL_S2_2"/>
    <property type="match status" value="1"/>
</dbReference>
<proteinExistence type="inferred from homology"/>
<comment type="similarity">
    <text evidence="1">Belongs to the universal ribosomal protein uS2 family.</text>
</comment>
<sequence>MSAQVRETLVPSELYRKAGVIYGTQICTRYMRQFVHRILPEGYYQLDYLKIDERLAMAAKFLSTFEPEKIAVVSVRIYGQKPVRMMCERVGCKAITGRIIPGTFTNPNLEHYVEPDVVVVTDPRMDRQAVVEASKVGIPVVALVDTDNSIENIDLVIPANNRGRRSLALIYWILTREILRRRGVLKPDEDLDVSYEEFMARKVFK</sequence>
<name>RS2_AERPE</name>
<keyword id="KW-1185">Reference proteome</keyword>
<keyword id="KW-0687">Ribonucleoprotein</keyword>
<keyword id="KW-0689">Ribosomal protein</keyword>